<proteinExistence type="inferred from homology"/>
<organism>
    <name type="scientific">Methanosarcina acetivorans (strain ATCC 35395 / DSM 2834 / JCM 12185 / C2A)</name>
    <dbReference type="NCBI Taxonomy" id="188937"/>
    <lineage>
        <taxon>Archaea</taxon>
        <taxon>Methanobacteriati</taxon>
        <taxon>Methanobacteriota</taxon>
        <taxon>Stenosarchaea group</taxon>
        <taxon>Methanomicrobia</taxon>
        <taxon>Methanosarcinales</taxon>
        <taxon>Methanosarcinaceae</taxon>
        <taxon>Methanosarcina</taxon>
    </lineage>
</organism>
<name>RS15_METAC</name>
<dbReference type="EMBL" id="AE010299">
    <property type="protein sequence ID" value="AAM04382.1"/>
    <property type="molecule type" value="Genomic_DNA"/>
</dbReference>
<dbReference type="RefSeq" id="WP_011020987.1">
    <property type="nucleotide sequence ID" value="NC_003552.1"/>
</dbReference>
<dbReference type="SMR" id="Q8TS56"/>
<dbReference type="FunCoup" id="Q8TS56">
    <property type="interactions" value="169"/>
</dbReference>
<dbReference type="STRING" id="188937.MA_0949"/>
<dbReference type="EnsemblBacteria" id="AAM04382">
    <property type="protein sequence ID" value="AAM04382"/>
    <property type="gene ID" value="MA_0949"/>
</dbReference>
<dbReference type="GeneID" id="1472839"/>
<dbReference type="KEGG" id="mac:MA_0949"/>
<dbReference type="HOGENOM" id="CLU_090139_2_0_2"/>
<dbReference type="InParanoid" id="Q8TS56"/>
<dbReference type="OrthoDB" id="6533at2157"/>
<dbReference type="PhylomeDB" id="Q8TS56"/>
<dbReference type="Proteomes" id="UP000002487">
    <property type="component" value="Chromosome"/>
</dbReference>
<dbReference type="GO" id="GO:0022627">
    <property type="term" value="C:cytosolic small ribosomal subunit"/>
    <property type="evidence" value="ECO:0000318"/>
    <property type="project" value="GO_Central"/>
</dbReference>
<dbReference type="GO" id="GO:0070181">
    <property type="term" value="F:small ribosomal subunit rRNA binding"/>
    <property type="evidence" value="ECO:0000318"/>
    <property type="project" value="GO_Central"/>
</dbReference>
<dbReference type="GO" id="GO:0003735">
    <property type="term" value="F:structural constituent of ribosome"/>
    <property type="evidence" value="ECO:0000318"/>
    <property type="project" value="GO_Central"/>
</dbReference>
<dbReference type="GO" id="GO:0006412">
    <property type="term" value="P:translation"/>
    <property type="evidence" value="ECO:0007669"/>
    <property type="project" value="UniProtKB-UniRule"/>
</dbReference>
<dbReference type="CDD" id="cd00353">
    <property type="entry name" value="Ribosomal_S15p_S13e"/>
    <property type="match status" value="1"/>
</dbReference>
<dbReference type="FunFam" id="1.10.287.10:FF:000003">
    <property type="entry name" value="40S ribosomal protein S13"/>
    <property type="match status" value="1"/>
</dbReference>
<dbReference type="Gene3D" id="4.10.860.130">
    <property type="match status" value="1"/>
</dbReference>
<dbReference type="Gene3D" id="1.10.287.10">
    <property type="entry name" value="S15/NS1, RNA-binding"/>
    <property type="match status" value="1"/>
</dbReference>
<dbReference type="HAMAP" id="MF_01343_A">
    <property type="entry name" value="Ribosomal_uS15_A"/>
    <property type="match status" value="1"/>
</dbReference>
<dbReference type="InterPro" id="IPR000589">
    <property type="entry name" value="Ribosomal_uS15"/>
</dbReference>
<dbReference type="InterPro" id="IPR023029">
    <property type="entry name" value="Ribosomal_uS15_arc_euk"/>
</dbReference>
<dbReference type="InterPro" id="IPR012606">
    <property type="entry name" value="Ribosomal_uS15_N"/>
</dbReference>
<dbReference type="InterPro" id="IPR009068">
    <property type="entry name" value="uS15_NS1_RNA-bd_sf"/>
</dbReference>
<dbReference type="NCBIfam" id="NF006331">
    <property type="entry name" value="PRK08561.1"/>
    <property type="match status" value="1"/>
</dbReference>
<dbReference type="PANTHER" id="PTHR11885">
    <property type="entry name" value="RIBOSOMAL PROTEIN S15P/S13E"/>
    <property type="match status" value="1"/>
</dbReference>
<dbReference type="PANTHER" id="PTHR11885:SF6">
    <property type="entry name" value="SMALL RIBOSOMAL SUBUNIT PROTEIN US15"/>
    <property type="match status" value="1"/>
</dbReference>
<dbReference type="Pfam" id="PF08069">
    <property type="entry name" value="Ribosomal_S13_N"/>
    <property type="match status" value="1"/>
</dbReference>
<dbReference type="Pfam" id="PF00312">
    <property type="entry name" value="Ribosomal_S15"/>
    <property type="match status" value="1"/>
</dbReference>
<dbReference type="SMART" id="SM01386">
    <property type="entry name" value="Ribosomal_S13_N"/>
    <property type="match status" value="1"/>
</dbReference>
<dbReference type="SMART" id="SM01387">
    <property type="entry name" value="Ribosomal_S15"/>
    <property type="match status" value="1"/>
</dbReference>
<dbReference type="SUPFAM" id="SSF47060">
    <property type="entry name" value="S15/NS1 RNA-binding domain"/>
    <property type="match status" value="1"/>
</dbReference>
<dbReference type="PROSITE" id="PS00362">
    <property type="entry name" value="RIBOSOMAL_S15"/>
    <property type="match status" value="1"/>
</dbReference>
<feature type="chain" id="PRO_0000115609" description="Small ribosomal subunit protein uS15">
    <location>
        <begin position="1"/>
        <end position="152"/>
    </location>
</feature>
<feature type="region of interest" description="Disordered" evidence="2">
    <location>
        <begin position="1"/>
        <end position="23"/>
    </location>
</feature>
<feature type="compositionally biased region" description="Basic residues" evidence="2">
    <location>
        <begin position="1"/>
        <end position="11"/>
    </location>
</feature>
<keyword id="KW-1185">Reference proteome</keyword>
<keyword id="KW-0687">Ribonucleoprotein</keyword>
<keyword id="KW-0689">Ribosomal protein</keyword>
<comment type="subunit">
    <text evidence="1">Part of the 30S ribosomal subunit.</text>
</comment>
<comment type="similarity">
    <text evidence="1">Belongs to the universal ribosomal protein uS15 family.</text>
</comment>
<gene>
    <name evidence="1" type="primary">rps15</name>
    <name type="ordered locus">MA_0949</name>
</gene>
<evidence type="ECO:0000255" key="1">
    <source>
        <dbReference type="HAMAP-Rule" id="MF_01343"/>
    </source>
</evidence>
<evidence type="ECO:0000256" key="2">
    <source>
        <dbReference type="SAM" id="MobiDB-lite"/>
    </source>
</evidence>
<evidence type="ECO:0000305" key="3"/>
<sequence length="152" mass="17470">MAKMHTKRKGKSSSTRPIRTDPPEWCKIGADEVTTIVLDLWKQGVSTAEIGMVLRDRYGVPDAKLITGKKVTTILKENNVAPNIPEDLTNLIVKALGLRKHLSVNKKDVHNKRSLNLTESKIRRLVKYYKQEKVLPRDWFYKPETAEMMITR</sequence>
<protein>
    <recommendedName>
        <fullName evidence="1">Small ribosomal subunit protein uS15</fullName>
    </recommendedName>
    <alternativeName>
        <fullName evidence="3">30S ribosomal protein S15</fullName>
    </alternativeName>
</protein>
<accession>Q8TS56</accession>
<reference key="1">
    <citation type="journal article" date="2002" name="Genome Res.">
        <title>The genome of Methanosarcina acetivorans reveals extensive metabolic and physiological diversity.</title>
        <authorList>
            <person name="Galagan J.E."/>
            <person name="Nusbaum C."/>
            <person name="Roy A."/>
            <person name="Endrizzi M.G."/>
            <person name="Macdonald P."/>
            <person name="FitzHugh W."/>
            <person name="Calvo S."/>
            <person name="Engels R."/>
            <person name="Smirnov S."/>
            <person name="Atnoor D."/>
            <person name="Brown A."/>
            <person name="Allen N."/>
            <person name="Naylor J."/>
            <person name="Stange-Thomann N."/>
            <person name="DeArellano K."/>
            <person name="Johnson R."/>
            <person name="Linton L."/>
            <person name="McEwan P."/>
            <person name="McKernan K."/>
            <person name="Talamas J."/>
            <person name="Tirrell A."/>
            <person name="Ye W."/>
            <person name="Zimmer A."/>
            <person name="Barber R.D."/>
            <person name="Cann I."/>
            <person name="Graham D.E."/>
            <person name="Grahame D.A."/>
            <person name="Guss A.M."/>
            <person name="Hedderich R."/>
            <person name="Ingram-Smith C."/>
            <person name="Kuettner H.C."/>
            <person name="Krzycki J.A."/>
            <person name="Leigh J.A."/>
            <person name="Li W."/>
            <person name="Liu J."/>
            <person name="Mukhopadhyay B."/>
            <person name="Reeve J.N."/>
            <person name="Smith K."/>
            <person name="Springer T.A."/>
            <person name="Umayam L.A."/>
            <person name="White O."/>
            <person name="White R.H."/>
            <person name="de Macario E.C."/>
            <person name="Ferry J.G."/>
            <person name="Jarrell K.F."/>
            <person name="Jing H."/>
            <person name="Macario A.J.L."/>
            <person name="Paulsen I.T."/>
            <person name="Pritchett M."/>
            <person name="Sowers K.R."/>
            <person name="Swanson R.V."/>
            <person name="Zinder S.H."/>
            <person name="Lander E."/>
            <person name="Metcalf W.W."/>
            <person name="Birren B."/>
        </authorList>
    </citation>
    <scope>NUCLEOTIDE SEQUENCE [LARGE SCALE GENOMIC DNA]</scope>
    <source>
        <strain>ATCC 35395 / DSM 2834 / JCM 12185 / C2A</strain>
    </source>
</reference>